<evidence type="ECO:0000255" key="1">
    <source>
        <dbReference type="HAMAP-Rule" id="MF_00163"/>
    </source>
</evidence>
<accession>A4VFH8</accession>
<sequence>MAILNILEFPDPRLRTIAKPVDVVDDGIRQLVDDMFETMYEAPGIGLAATQVNVHKRVVVMDLSEDRSEPRVFINPEFEPLTDQMDQYQEGCLSVPGFYENVDRPQKVRIKALDRDGKPYELIAEGLLAVCIQHECDHLNGKLFVDYLSSLKRDRIKKKLEKIHRQQA</sequence>
<dbReference type="EC" id="3.5.1.88" evidence="1"/>
<dbReference type="EMBL" id="CP000304">
    <property type="protein sequence ID" value="ABP77729.1"/>
    <property type="molecule type" value="Genomic_DNA"/>
</dbReference>
<dbReference type="RefSeq" id="WP_011911272.1">
    <property type="nucleotide sequence ID" value="NC_009434.1"/>
</dbReference>
<dbReference type="SMR" id="A4VFH8"/>
<dbReference type="GeneID" id="66819249"/>
<dbReference type="KEGG" id="psa:PST_0021"/>
<dbReference type="eggNOG" id="COG0242">
    <property type="taxonomic scope" value="Bacteria"/>
</dbReference>
<dbReference type="HOGENOM" id="CLU_061901_2_1_6"/>
<dbReference type="Proteomes" id="UP000000233">
    <property type="component" value="Chromosome"/>
</dbReference>
<dbReference type="GO" id="GO:0046872">
    <property type="term" value="F:metal ion binding"/>
    <property type="evidence" value="ECO:0007669"/>
    <property type="project" value="UniProtKB-KW"/>
</dbReference>
<dbReference type="GO" id="GO:0042586">
    <property type="term" value="F:peptide deformylase activity"/>
    <property type="evidence" value="ECO:0007669"/>
    <property type="project" value="UniProtKB-UniRule"/>
</dbReference>
<dbReference type="GO" id="GO:0043686">
    <property type="term" value="P:co-translational protein modification"/>
    <property type="evidence" value="ECO:0007669"/>
    <property type="project" value="TreeGrafter"/>
</dbReference>
<dbReference type="GO" id="GO:0006412">
    <property type="term" value="P:translation"/>
    <property type="evidence" value="ECO:0007669"/>
    <property type="project" value="UniProtKB-UniRule"/>
</dbReference>
<dbReference type="CDD" id="cd00487">
    <property type="entry name" value="Pep_deformylase"/>
    <property type="match status" value="1"/>
</dbReference>
<dbReference type="FunFam" id="3.90.45.10:FF:000001">
    <property type="entry name" value="Peptide deformylase"/>
    <property type="match status" value="1"/>
</dbReference>
<dbReference type="Gene3D" id="3.90.45.10">
    <property type="entry name" value="Peptide deformylase"/>
    <property type="match status" value="1"/>
</dbReference>
<dbReference type="HAMAP" id="MF_00163">
    <property type="entry name" value="Pep_deformylase"/>
    <property type="match status" value="1"/>
</dbReference>
<dbReference type="InterPro" id="IPR023635">
    <property type="entry name" value="Peptide_deformylase"/>
</dbReference>
<dbReference type="InterPro" id="IPR036821">
    <property type="entry name" value="Peptide_deformylase_sf"/>
</dbReference>
<dbReference type="NCBIfam" id="TIGR00079">
    <property type="entry name" value="pept_deformyl"/>
    <property type="match status" value="1"/>
</dbReference>
<dbReference type="NCBIfam" id="NF001159">
    <property type="entry name" value="PRK00150.1-3"/>
    <property type="match status" value="1"/>
</dbReference>
<dbReference type="PANTHER" id="PTHR10458">
    <property type="entry name" value="PEPTIDE DEFORMYLASE"/>
    <property type="match status" value="1"/>
</dbReference>
<dbReference type="PANTHER" id="PTHR10458:SF21">
    <property type="entry name" value="PEPTIDE DEFORMYLASE"/>
    <property type="match status" value="1"/>
</dbReference>
<dbReference type="Pfam" id="PF01327">
    <property type="entry name" value="Pep_deformylase"/>
    <property type="match status" value="1"/>
</dbReference>
<dbReference type="PIRSF" id="PIRSF004749">
    <property type="entry name" value="Pep_def"/>
    <property type="match status" value="1"/>
</dbReference>
<dbReference type="PRINTS" id="PR01576">
    <property type="entry name" value="PDEFORMYLASE"/>
</dbReference>
<dbReference type="SUPFAM" id="SSF56420">
    <property type="entry name" value="Peptide deformylase"/>
    <property type="match status" value="1"/>
</dbReference>
<protein>
    <recommendedName>
        <fullName evidence="1">Peptide deformylase</fullName>
        <shortName evidence="1">PDF</shortName>
        <ecNumber evidence="1">3.5.1.88</ecNumber>
    </recommendedName>
    <alternativeName>
        <fullName evidence="1">Polypeptide deformylase</fullName>
    </alternativeName>
</protein>
<name>DEF_STUS1</name>
<organism>
    <name type="scientific">Stutzerimonas stutzeri (strain A1501)</name>
    <name type="common">Pseudomonas stutzeri</name>
    <dbReference type="NCBI Taxonomy" id="379731"/>
    <lineage>
        <taxon>Bacteria</taxon>
        <taxon>Pseudomonadati</taxon>
        <taxon>Pseudomonadota</taxon>
        <taxon>Gammaproteobacteria</taxon>
        <taxon>Pseudomonadales</taxon>
        <taxon>Pseudomonadaceae</taxon>
        <taxon>Stutzerimonas</taxon>
    </lineage>
</organism>
<gene>
    <name evidence="1" type="primary">def</name>
    <name type="ordered locus">PST_0021</name>
</gene>
<keyword id="KW-0378">Hydrolase</keyword>
<keyword id="KW-0408">Iron</keyword>
<keyword id="KW-0479">Metal-binding</keyword>
<keyword id="KW-0648">Protein biosynthesis</keyword>
<keyword id="KW-1185">Reference proteome</keyword>
<feature type="chain" id="PRO_0000301083" description="Peptide deformylase">
    <location>
        <begin position="1"/>
        <end position="168"/>
    </location>
</feature>
<feature type="active site" evidence="1">
    <location>
        <position position="135"/>
    </location>
</feature>
<feature type="binding site" evidence="1">
    <location>
        <position position="92"/>
    </location>
    <ligand>
        <name>Fe cation</name>
        <dbReference type="ChEBI" id="CHEBI:24875"/>
    </ligand>
</feature>
<feature type="binding site" evidence="1">
    <location>
        <position position="134"/>
    </location>
    <ligand>
        <name>Fe cation</name>
        <dbReference type="ChEBI" id="CHEBI:24875"/>
    </ligand>
</feature>
<feature type="binding site" evidence="1">
    <location>
        <position position="138"/>
    </location>
    <ligand>
        <name>Fe cation</name>
        <dbReference type="ChEBI" id="CHEBI:24875"/>
    </ligand>
</feature>
<comment type="function">
    <text evidence="1">Removes the formyl group from the N-terminal Met of newly synthesized proteins. Requires at least a dipeptide for an efficient rate of reaction. N-terminal L-methionine is a prerequisite for activity but the enzyme has broad specificity at other positions.</text>
</comment>
<comment type="catalytic activity">
    <reaction evidence="1">
        <text>N-terminal N-formyl-L-methionyl-[peptide] + H2O = N-terminal L-methionyl-[peptide] + formate</text>
        <dbReference type="Rhea" id="RHEA:24420"/>
        <dbReference type="Rhea" id="RHEA-COMP:10639"/>
        <dbReference type="Rhea" id="RHEA-COMP:10640"/>
        <dbReference type="ChEBI" id="CHEBI:15377"/>
        <dbReference type="ChEBI" id="CHEBI:15740"/>
        <dbReference type="ChEBI" id="CHEBI:49298"/>
        <dbReference type="ChEBI" id="CHEBI:64731"/>
        <dbReference type="EC" id="3.5.1.88"/>
    </reaction>
</comment>
<comment type="cofactor">
    <cofactor evidence="1">
        <name>Fe(2+)</name>
        <dbReference type="ChEBI" id="CHEBI:29033"/>
    </cofactor>
    <text evidence="1">Binds 1 Fe(2+) ion.</text>
</comment>
<comment type="similarity">
    <text evidence="1">Belongs to the polypeptide deformylase family.</text>
</comment>
<reference key="1">
    <citation type="journal article" date="2008" name="Proc. Natl. Acad. Sci. U.S.A.">
        <title>Nitrogen fixation island and rhizosphere competence traits in the genome of root-associated Pseudomonas stutzeri A1501.</title>
        <authorList>
            <person name="Yan Y."/>
            <person name="Yang J."/>
            <person name="Dou Y."/>
            <person name="Chen M."/>
            <person name="Ping S."/>
            <person name="Peng J."/>
            <person name="Lu W."/>
            <person name="Zhang W."/>
            <person name="Yao Z."/>
            <person name="Li H."/>
            <person name="Liu W."/>
            <person name="He S."/>
            <person name="Geng L."/>
            <person name="Zhang X."/>
            <person name="Yang F."/>
            <person name="Yu H."/>
            <person name="Zhan Y."/>
            <person name="Li D."/>
            <person name="Lin Z."/>
            <person name="Wang Y."/>
            <person name="Elmerich C."/>
            <person name="Lin M."/>
            <person name="Jin Q."/>
        </authorList>
    </citation>
    <scope>NUCLEOTIDE SEQUENCE [LARGE SCALE GENOMIC DNA]</scope>
    <source>
        <strain>A1501</strain>
    </source>
</reference>
<proteinExistence type="inferred from homology"/>